<gene>
    <name type="primary">RPC37</name>
    <name type="ordered locus">YKR025W</name>
</gene>
<keyword id="KW-0002">3D-structure</keyword>
<keyword id="KW-0240">DNA-directed RNA polymerase</keyword>
<keyword id="KW-0539">Nucleus</keyword>
<keyword id="KW-0597">Phosphoprotein</keyword>
<keyword id="KW-1185">Reference proteome</keyword>
<keyword id="KW-0804">Transcription</keyword>
<reference key="1">
    <citation type="journal article" date="1994" name="Nature">
        <title>Complete DNA sequence of yeast chromosome XI.</title>
        <authorList>
            <person name="Dujon B."/>
            <person name="Alexandraki D."/>
            <person name="Andre B."/>
            <person name="Ansorge W."/>
            <person name="Baladron V."/>
            <person name="Ballesta J.P.G."/>
            <person name="Banrevi A."/>
            <person name="Bolle P.-A."/>
            <person name="Bolotin-Fukuhara M."/>
            <person name="Bossier P."/>
            <person name="Bou G."/>
            <person name="Boyer J."/>
            <person name="Buitrago M.J."/>
            <person name="Cheret G."/>
            <person name="Colleaux L."/>
            <person name="Daignan-Fornier B."/>
            <person name="del Rey F."/>
            <person name="Dion C."/>
            <person name="Domdey H."/>
            <person name="Duesterhoeft A."/>
            <person name="Duesterhus S."/>
            <person name="Entian K.-D."/>
            <person name="Erfle H."/>
            <person name="Esteban P.F."/>
            <person name="Feldmann H."/>
            <person name="Fernandes L."/>
            <person name="Fobo G.M."/>
            <person name="Fritz C."/>
            <person name="Fukuhara H."/>
            <person name="Gabel C."/>
            <person name="Gaillon L."/>
            <person name="Garcia-Cantalejo J.M."/>
            <person name="Garcia-Ramirez J.J."/>
            <person name="Gent M.E."/>
            <person name="Ghazvini M."/>
            <person name="Goffeau A."/>
            <person name="Gonzalez A."/>
            <person name="Grothues D."/>
            <person name="Guerreiro P."/>
            <person name="Hegemann J.H."/>
            <person name="Hewitt N."/>
            <person name="Hilger F."/>
            <person name="Hollenberg C.P."/>
            <person name="Horaitis O."/>
            <person name="Indge K.J."/>
            <person name="Jacquier A."/>
            <person name="James C.M."/>
            <person name="Jauniaux J.-C."/>
            <person name="Jimenez A."/>
            <person name="Keuchel H."/>
            <person name="Kirchrath L."/>
            <person name="Kleine K."/>
            <person name="Koetter P."/>
            <person name="Legrain P."/>
            <person name="Liebl S."/>
            <person name="Louis E.J."/>
            <person name="Maia e Silva A."/>
            <person name="Marck C."/>
            <person name="Monnier A.-L."/>
            <person name="Moestl D."/>
            <person name="Mueller S."/>
            <person name="Obermaier B."/>
            <person name="Oliver S.G."/>
            <person name="Pallier C."/>
            <person name="Pascolo S."/>
            <person name="Pfeiffer F."/>
            <person name="Philippsen P."/>
            <person name="Planta R.J."/>
            <person name="Pohl F.M."/>
            <person name="Pohl T.M."/>
            <person name="Poehlmann R."/>
            <person name="Portetelle D."/>
            <person name="Purnelle B."/>
            <person name="Puzos V."/>
            <person name="Ramezani Rad M."/>
            <person name="Rasmussen S.W."/>
            <person name="Remacha M.A."/>
            <person name="Revuelta J.L."/>
            <person name="Richard G.-F."/>
            <person name="Rieger M."/>
            <person name="Rodrigues-Pousada C."/>
            <person name="Rose M."/>
            <person name="Rupp T."/>
            <person name="Santos M.A."/>
            <person name="Schwager C."/>
            <person name="Sensen C."/>
            <person name="Skala J."/>
            <person name="Soares H."/>
            <person name="Sor F."/>
            <person name="Stegemann J."/>
            <person name="Tettelin H."/>
            <person name="Thierry A."/>
            <person name="Tzermia M."/>
            <person name="Urrestarazu L.A."/>
            <person name="van Dyck L."/>
            <person name="van Vliet-Reedijk J.C."/>
            <person name="Valens M."/>
            <person name="Vandenbol M."/>
            <person name="Vilela C."/>
            <person name="Vissers S."/>
            <person name="von Wettstein D."/>
            <person name="Voss H."/>
            <person name="Wiemann S."/>
            <person name="Xu G."/>
            <person name="Zimmermann J."/>
            <person name="Haasemann M."/>
            <person name="Becker I."/>
            <person name="Mewes H.-W."/>
        </authorList>
    </citation>
    <scope>NUCLEOTIDE SEQUENCE [LARGE SCALE GENOMIC DNA]</scope>
    <source>
        <strain>ATCC 204508 / S288c</strain>
    </source>
</reference>
<reference key="2">
    <citation type="journal article" date="2014" name="G3 (Bethesda)">
        <title>The reference genome sequence of Saccharomyces cerevisiae: Then and now.</title>
        <authorList>
            <person name="Engel S.R."/>
            <person name="Dietrich F.S."/>
            <person name="Fisk D.G."/>
            <person name="Binkley G."/>
            <person name="Balakrishnan R."/>
            <person name="Costanzo M.C."/>
            <person name="Dwight S.S."/>
            <person name="Hitz B.C."/>
            <person name="Karra K."/>
            <person name="Nash R.S."/>
            <person name="Weng S."/>
            <person name="Wong E.D."/>
            <person name="Lloyd P."/>
            <person name="Skrzypek M.S."/>
            <person name="Miyasato S.R."/>
            <person name="Simison M."/>
            <person name="Cherry J.M."/>
        </authorList>
    </citation>
    <scope>GENOME REANNOTATION</scope>
    <source>
        <strain>ATCC 204508 / S288c</strain>
    </source>
</reference>
<reference key="3">
    <citation type="journal article" date="2007" name="Genome Res.">
        <title>Approaching a complete repository of sequence-verified protein-encoding clones for Saccharomyces cerevisiae.</title>
        <authorList>
            <person name="Hu Y."/>
            <person name="Rolfs A."/>
            <person name="Bhullar B."/>
            <person name="Murthy T.V.S."/>
            <person name="Zhu C."/>
            <person name="Berger M.F."/>
            <person name="Camargo A.A."/>
            <person name="Kelley F."/>
            <person name="McCarron S."/>
            <person name="Jepson D."/>
            <person name="Richardson A."/>
            <person name="Raphael J."/>
            <person name="Moreira D."/>
            <person name="Taycher E."/>
            <person name="Zuo D."/>
            <person name="Mohr S."/>
            <person name="Kane M.F."/>
            <person name="Williamson J."/>
            <person name="Simpson A.J.G."/>
            <person name="Bulyk M.L."/>
            <person name="Harlow E."/>
            <person name="Marsischky G."/>
            <person name="Kolodner R.D."/>
            <person name="LaBaer J."/>
        </authorList>
    </citation>
    <scope>NUCLEOTIDE SEQUENCE [GENOMIC DNA]</scope>
    <source>
        <strain>ATCC 204508 / S288c</strain>
    </source>
</reference>
<reference key="4">
    <citation type="journal article" date="1998" name="Cold Spring Harb. Symp. Quant. Biol.">
        <title>The yeast RNA polymerase III transcription machinery: a paradigm for eukaryotic gene activation.</title>
        <authorList>
            <person name="Chedin S."/>
            <person name="Ferri M.L."/>
            <person name="Peyroche G."/>
            <person name="Andrau J.-C."/>
            <person name="Jourdain S."/>
            <person name="Lefebvre O."/>
            <person name="Werner M."/>
            <person name="Carles C."/>
            <person name="Sentenac A."/>
        </authorList>
    </citation>
    <scope>REVIEW ON THE RNA POL III COMPLEX</scope>
</reference>
<reference key="5">
    <citation type="journal article" date="1999" name="Proc. Natl. Acad. Sci. U.S.A.">
        <title>A protein-protein interaction map of yeast RNA polymerase III.</title>
        <authorList>
            <person name="Flores A."/>
            <person name="Briand J.-F."/>
            <person name="Gadal O."/>
            <person name="Andrau J.-C."/>
            <person name="Rubbi L."/>
            <person name="Van Mullem V."/>
            <person name="Boschiero C."/>
            <person name="Goussot M."/>
            <person name="Marck C."/>
            <person name="Carles C."/>
            <person name="Thuriaux P."/>
            <person name="Sentenac A."/>
            <person name="Werner M."/>
        </authorList>
    </citation>
    <scope>IDENTIFICATION IN THE RNA POL III COMPLEX</scope>
    <scope>INTERACTION WITH RPC4</scope>
</reference>
<reference key="6">
    <citation type="journal article" date="2003" name="Nature">
        <title>Global analysis of protein localization in budding yeast.</title>
        <authorList>
            <person name="Huh W.-K."/>
            <person name="Falvo J.V."/>
            <person name="Gerke L.C."/>
            <person name="Carroll A.S."/>
            <person name="Howson R.W."/>
            <person name="Weissman J.S."/>
            <person name="O'Shea E.K."/>
        </authorList>
    </citation>
    <scope>SUBCELLULAR LOCATION [LARGE SCALE ANALYSIS]</scope>
</reference>
<reference key="7">
    <citation type="journal article" date="2003" name="Nature">
        <title>Global analysis of protein expression in yeast.</title>
        <authorList>
            <person name="Ghaemmaghami S."/>
            <person name="Huh W.-K."/>
            <person name="Bower K."/>
            <person name="Howson R.W."/>
            <person name="Belle A."/>
            <person name="Dephoure N."/>
            <person name="O'Shea E.K."/>
            <person name="Weissman J.S."/>
        </authorList>
    </citation>
    <scope>LEVEL OF PROTEIN EXPRESSION [LARGE SCALE ANALYSIS]</scope>
</reference>
<reference key="8">
    <citation type="journal article" date="2006" name="EMBO J.">
        <title>A subcomplex of RNA polymerase III subunits involved in transcription termination and reinitiation.</title>
        <authorList>
            <person name="Landrieux E."/>
            <person name="Alic N."/>
            <person name="Ducrot C."/>
            <person name="Acker J."/>
            <person name="Riva M."/>
            <person name="Carles C."/>
        </authorList>
    </citation>
    <scope>FUNCTION OF THE RPC53-RPC37 SUBCOMPLEX</scope>
</reference>
<reference key="9">
    <citation type="journal article" date="2008" name="Mol. Cell. Proteomics">
        <title>A multidimensional chromatography technology for in-depth phosphoproteome analysis.</title>
        <authorList>
            <person name="Albuquerque C.P."/>
            <person name="Smolka M.B."/>
            <person name="Payne S.H."/>
            <person name="Bafna V."/>
            <person name="Eng J."/>
            <person name="Zhou H."/>
        </authorList>
    </citation>
    <scope>PHOSPHORYLATION [LARGE SCALE ANALYSIS] AT THR-61</scope>
    <scope>IDENTIFICATION BY MASS SPECTROMETRY [LARGE SCALE ANALYSIS]</scope>
</reference>
<reference key="10">
    <citation type="journal article" date="2009" name="Science">
        <title>Global analysis of Cdk1 substrate phosphorylation sites provides insights into evolution.</title>
        <authorList>
            <person name="Holt L.J."/>
            <person name="Tuch B.B."/>
            <person name="Villen J."/>
            <person name="Johnson A.D."/>
            <person name="Gygi S.P."/>
            <person name="Morgan D.O."/>
        </authorList>
    </citation>
    <scope>PHOSPHORYLATION [LARGE SCALE ANALYSIS] AT THR-61</scope>
    <scope>IDENTIFICATION BY MASS SPECTROMETRY [LARGE SCALE ANALYSIS]</scope>
</reference>
<proteinExistence type="evidence at protein level"/>
<sequence>MSIDNKLFVTEEDEEDRTQDRADVEDESNDIDMIADENGTNSAIANEQEEKSEEVKAEDDTGEEEEDDPVIEEFPLKISGEEESLHVFQYANRPRLVGRKPAEHPFISAARYKPKSHLWEIDIPLDEQAFYNKDKAESEWNGVNVQTLKGVGVENNGQYAAFVKDMQVYLVPIERVAQLKPFFKYIDDANVTRKQEDARRNPNPSSQRAQVVTMSVKSVNDPSQNRLTGSLLAHKVADEEANIELTWAEGTFEQFKDTIVKEAEDKTLVALEKQEDYIDNLV</sequence>
<dbReference type="EMBL" id="Z28250">
    <property type="protein sequence ID" value="CAA82097.1"/>
    <property type="molecule type" value="Genomic_DNA"/>
</dbReference>
<dbReference type="EMBL" id="AY692886">
    <property type="protein sequence ID" value="AAT92905.1"/>
    <property type="molecule type" value="Genomic_DNA"/>
</dbReference>
<dbReference type="EMBL" id="BK006944">
    <property type="protein sequence ID" value="DAA09180.1"/>
    <property type="molecule type" value="Genomic_DNA"/>
</dbReference>
<dbReference type="PIR" id="S38094">
    <property type="entry name" value="S38094"/>
</dbReference>
<dbReference type="RefSeq" id="NP_012950.3">
    <property type="nucleotide sequence ID" value="NM_001179815.3"/>
</dbReference>
<dbReference type="PDB" id="5FJ8">
    <property type="method" value="EM"/>
    <property type="resolution" value="3.90 A"/>
    <property type="chains" value="M=1-282"/>
</dbReference>
<dbReference type="PDB" id="5FJ9">
    <property type="method" value="EM"/>
    <property type="resolution" value="4.60 A"/>
    <property type="chains" value="M=1-282"/>
</dbReference>
<dbReference type="PDB" id="5FJA">
    <property type="method" value="EM"/>
    <property type="resolution" value="4.65 A"/>
    <property type="chains" value="M=1-282"/>
</dbReference>
<dbReference type="PDB" id="6CNB">
    <property type="method" value="EM"/>
    <property type="resolution" value="4.10 A"/>
    <property type="chains" value="M=1-282"/>
</dbReference>
<dbReference type="PDB" id="6CNC">
    <property type="method" value="EM"/>
    <property type="resolution" value="4.10 A"/>
    <property type="chains" value="M=1-282"/>
</dbReference>
<dbReference type="PDB" id="6CND">
    <property type="method" value="EM"/>
    <property type="resolution" value="4.80 A"/>
    <property type="chains" value="M=1-282"/>
</dbReference>
<dbReference type="PDB" id="6CNF">
    <property type="method" value="EM"/>
    <property type="resolution" value="4.50 A"/>
    <property type="chains" value="M=1-282"/>
</dbReference>
<dbReference type="PDB" id="6EU0">
    <property type="method" value="EM"/>
    <property type="resolution" value="4.00 A"/>
    <property type="chains" value="M=1-282"/>
</dbReference>
<dbReference type="PDB" id="6EU1">
    <property type="method" value="EM"/>
    <property type="resolution" value="3.40 A"/>
    <property type="chains" value="M=1-282"/>
</dbReference>
<dbReference type="PDB" id="6EU2">
    <property type="method" value="EM"/>
    <property type="resolution" value="3.40 A"/>
    <property type="chains" value="M=1-282"/>
</dbReference>
<dbReference type="PDB" id="6EU3">
    <property type="method" value="EM"/>
    <property type="resolution" value="3.30 A"/>
    <property type="chains" value="M=1-282"/>
</dbReference>
<dbReference type="PDB" id="6F40">
    <property type="method" value="EM"/>
    <property type="resolution" value="3.70 A"/>
    <property type="chains" value="M=1-282"/>
</dbReference>
<dbReference type="PDB" id="6F41">
    <property type="method" value="EM"/>
    <property type="resolution" value="4.30 A"/>
    <property type="chains" value="M=1-282"/>
</dbReference>
<dbReference type="PDB" id="6F42">
    <property type="method" value="EM"/>
    <property type="resolution" value="5.50 A"/>
    <property type="chains" value="M=1-282"/>
</dbReference>
<dbReference type="PDB" id="6F44">
    <property type="method" value="EM"/>
    <property type="resolution" value="4.20 A"/>
    <property type="chains" value="M=1-282"/>
</dbReference>
<dbReference type="PDB" id="6TUT">
    <property type="method" value="EM"/>
    <property type="resolution" value="3.25 A"/>
    <property type="chains" value="M=1-282"/>
</dbReference>
<dbReference type="PDB" id="7Z0H">
    <property type="method" value="EM"/>
    <property type="resolution" value="2.60 A"/>
    <property type="chains" value="M=1-282"/>
</dbReference>
<dbReference type="PDB" id="7Z1L">
    <property type="method" value="EM"/>
    <property type="resolution" value="2.80 A"/>
    <property type="chains" value="M=1-282"/>
</dbReference>
<dbReference type="PDB" id="7Z1M">
    <property type="method" value="EM"/>
    <property type="resolution" value="3.40 A"/>
    <property type="chains" value="M=1-282"/>
</dbReference>
<dbReference type="PDB" id="7Z1O">
    <property type="method" value="EM"/>
    <property type="resolution" value="2.70 A"/>
    <property type="chains" value="M=1-282"/>
</dbReference>
<dbReference type="PDB" id="7Z2Z">
    <property type="method" value="EM"/>
    <property type="resolution" value="3.07 A"/>
    <property type="chains" value="M=1-282"/>
</dbReference>
<dbReference type="PDB" id="7Z30">
    <property type="method" value="EM"/>
    <property type="resolution" value="2.90 A"/>
    <property type="chains" value="M=1-282"/>
</dbReference>
<dbReference type="PDB" id="7Z31">
    <property type="method" value="EM"/>
    <property type="resolution" value="2.76 A"/>
    <property type="chains" value="M=1-282"/>
</dbReference>
<dbReference type="PDB" id="8BWS">
    <property type="method" value="EM"/>
    <property type="resolution" value="3.20 A"/>
    <property type="chains" value="M=1-282"/>
</dbReference>
<dbReference type="PDBsum" id="5FJ8"/>
<dbReference type="PDBsum" id="5FJ9"/>
<dbReference type="PDBsum" id="5FJA"/>
<dbReference type="PDBsum" id="6CNB"/>
<dbReference type="PDBsum" id="6CNC"/>
<dbReference type="PDBsum" id="6CND"/>
<dbReference type="PDBsum" id="6CNF"/>
<dbReference type="PDBsum" id="6EU0"/>
<dbReference type="PDBsum" id="6EU1"/>
<dbReference type="PDBsum" id="6EU2"/>
<dbReference type="PDBsum" id="6EU3"/>
<dbReference type="PDBsum" id="6F40"/>
<dbReference type="PDBsum" id="6F41"/>
<dbReference type="PDBsum" id="6F42"/>
<dbReference type="PDBsum" id="6F44"/>
<dbReference type="PDBsum" id="6TUT"/>
<dbReference type="PDBsum" id="7Z0H"/>
<dbReference type="PDBsum" id="7Z1L"/>
<dbReference type="PDBsum" id="7Z1M"/>
<dbReference type="PDBsum" id="7Z1O"/>
<dbReference type="PDBsum" id="7Z2Z"/>
<dbReference type="PDBsum" id="7Z30"/>
<dbReference type="PDBsum" id="7Z31"/>
<dbReference type="PDBsum" id="8BWS"/>
<dbReference type="EMDB" id="EMD-10595"/>
<dbReference type="EMDB" id="EMD-14421"/>
<dbReference type="EMDB" id="EMD-14447"/>
<dbReference type="EMDB" id="EMD-14448"/>
<dbReference type="EMDB" id="EMD-14451"/>
<dbReference type="EMDB" id="EMD-14468"/>
<dbReference type="EMDB" id="EMD-14469"/>
<dbReference type="EMDB" id="EMD-14470"/>
<dbReference type="EMDB" id="EMD-16299"/>
<dbReference type="EMDB" id="EMD-3955"/>
<dbReference type="EMDB" id="EMD-3956"/>
<dbReference type="EMDB" id="EMD-3957"/>
<dbReference type="EMDB" id="EMD-3958"/>
<dbReference type="EMDB" id="EMD-4180"/>
<dbReference type="EMDB" id="EMD-4181"/>
<dbReference type="EMDB" id="EMD-4182"/>
<dbReference type="EMDB" id="EMD-4183"/>
<dbReference type="EMDB" id="EMD-7530"/>
<dbReference type="EMDB" id="EMD-7531"/>
<dbReference type="EMDB" id="EMD-7532"/>
<dbReference type="EMDB" id="EMD-7533"/>
<dbReference type="SMR" id="P36121"/>
<dbReference type="BioGRID" id="34157">
    <property type="interactions" value="85"/>
</dbReference>
<dbReference type="ComplexPortal" id="CPX-2660">
    <property type="entry name" value="DNA-directed RNA polymerase III complex"/>
</dbReference>
<dbReference type="DIP" id="DIP-761N"/>
<dbReference type="FunCoup" id="P36121">
    <property type="interactions" value="170"/>
</dbReference>
<dbReference type="IntAct" id="P36121">
    <property type="interactions" value="28"/>
</dbReference>
<dbReference type="MINT" id="P36121"/>
<dbReference type="STRING" id="4932.YKR025W"/>
<dbReference type="iPTMnet" id="P36121"/>
<dbReference type="PaxDb" id="4932-YKR025W"/>
<dbReference type="PeptideAtlas" id="P36121"/>
<dbReference type="EnsemblFungi" id="YKR025W_mRNA">
    <property type="protein sequence ID" value="YKR025W"/>
    <property type="gene ID" value="YKR025W"/>
</dbReference>
<dbReference type="GeneID" id="853895"/>
<dbReference type="KEGG" id="sce:YKR025W"/>
<dbReference type="AGR" id="SGD:S000001733"/>
<dbReference type="SGD" id="S000001733">
    <property type="gene designation" value="RPC37"/>
</dbReference>
<dbReference type="VEuPathDB" id="FungiDB:YKR025W"/>
<dbReference type="eggNOG" id="KOG2354">
    <property type="taxonomic scope" value="Eukaryota"/>
</dbReference>
<dbReference type="GeneTree" id="ENSGT00390000016123"/>
<dbReference type="HOGENOM" id="CLU_072845_1_0_1"/>
<dbReference type="InParanoid" id="P36121"/>
<dbReference type="OMA" id="NCHASIK"/>
<dbReference type="OrthoDB" id="340681at2759"/>
<dbReference type="BioCyc" id="YEAST:G3O-32001-MONOMER"/>
<dbReference type="BioGRID-ORCS" id="853895">
    <property type="hits" value="7 hits in 10 CRISPR screens"/>
</dbReference>
<dbReference type="EvolutionaryTrace" id="P36121"/>
<dbReference type="PRO" id="PR:P36121"/>
<dbReference type="Proteomes" id="UP000002311">
    <property type="component" value="Chromosome XI"/>
</dbReference>
<dbReference type="RNAct" id="P36121">
    <property type="molecule type" value="protein"/>
</dbReference>
<dbReference type="GO" id="GO:0005634">
    <property type="term" value="C:nucleus"/>
    <property type="evidence" value="ECO:0000303"/>
    <property type="project" value="ComplexPortal"/>
</dbReference>
<dbReference type="GO" id="GO:0005666">
    <property type="term" value="C:RNA polymerase III complex"/>
    <property type="evidence" value="ECO:0000314"/>
    <property type="project" value="SGD"/>
</dbReference>
<dbReference type="GO" id="GO:0006386">
    <property type="term" value="P:termination of RNA polymerase III transcription"/>
    <property type="evidence" value="ECO:0000314"/>
    <property type="project" value="ComplexPortal"/>
</dbReference>
<dbReference type="GO" id="GO:0006383">
    <property type="term" value="P:transcription by RNA polymerase III"/>
    <property type="evidence" value="ECO:0000314"/>
    <property type="project" value="ComplexPortal"/>
</dbReference>
<dbReference type="GO" id="GO:0006384">
    <property type="term" value="P:transcription initiation at RNA polymerase III promoter"/>
    <property type="evidence" value="ECO:0000314"/>
    <property type="project" value="ComplexPortal"/>
</dbReference>
<dbReference type="GO" id="GO:0042797">
    <property type="term" value="P:tRNA transcription by RNA polymerase III"/>
    <property type="evidence" value="ECO:0000314"/>
    <property type="project" value="SGD"/>
</dbReference>
<dbReference type="InterPro" id="IPR006886">
    <property type="entry name" value="RNA_pol_III_Rpc5"/>
</dbReference>
<dbReference type="PANTHER" id="PTHR12069:SF0">
    <property type="entry name" value="DNA-DIRECTED RNA POLYMERASE III SUBUNIT RPC5"/>
    <property type="match status" value="1"/>
</dbReference>
<dbReference type="PANTHER" id="PTHR12069">
    <property type="entry name" value="DNA-DIRECTED RNA POLYMERASES III 80 KDA POLYPEPTIDE RNA POLYMERASE III SUBUNIT 5"/>
    <property type="match status" value="1"/>
</dbReference>
<dbReference type="Pfam" id="PF04801">
    <property type="entry name" value="RPC5"/>
    <property type="match status" value="1"/>
</dbReference>
<organism>
    <name type="scientific">Saccharomyces cerevisiae (strain ATCC 204508 / S288c)</name>
    <name type="common">Baker's yeast</name>
    <dbReference type="NCBI Taxonomy" id="559292"/>
    <lineage>
        <taxon>Eukaryota</taxon>
        <taxon>Fungi</taxon>
        <taxon>Dikarya</taxon>
        <taxon>Ascomycota</taxon>
        <taxon>Saccharomycotina</taxon>
        <taxon>Saccharomycetes</taxon>
        <taxon>Saccharomycetales</taxon>
        <taxon>Saccharomycetaceae</taxon>
        <taxon>Saccharomyces</taxon>
    </lineage>
</organism>
<protein>
    <recommendedName>
        <fullName>DNA-directed RNA polymerase III subunit RPC5</fullName>
        <shortName>RNA polymerase III subunit C5</shortName>
    </recommendedName>
    <alternativeName>
        <fullName>DNA-directed RNA polymerase III 37 kDa polypeptide</fullName>
    </alternativeName>
    <alternativeName>
        <fullName>RNA polymerase III subunit C37</fullName>
    </alternativeName>
</protein>
<comment type="function">
    <text evidence="5">DNA-dependent RNA polymerase catalyzes the transcription of DNA into RNA using the four ribonucleoside triphosphates as substrates. Specific peripheric component of RNA polymerase III which synthesizes small RNAs, such as 5S rRNA and tRNAs. The RPC53/RPC4-RPC37/RPC5 subcomplex is required for terminator recognition and reinitiation.</text>
</comment>
<comment type="subunit">
    <text evidence="2">Component of the RNA polymerase III (Pol III) complex consisting of 17 subunits. Interacts with RPC53/RPC4. RPC53/RPC4, RPC37/RPC5 and RPC11/RPC10 probably form a Pol III subcomplex.</text>
</comment>
<comment type="interaction">
    <interactant intactId="EBI-26370">
        <id>P36121</id>
    </interactant>
    <interactant intactId="EBI-15826">
        <id>P25441</id>
        <label>RPC53</label>
    </interactant>
    <organismsDiffer>false</organismsDiffer>
    <experiments>3</experiments>
</comment>
<comment type="subcellular location">
    <subcellularLocation>
        <location evidence="3">Nucleus</location>
    </subcellularLocation>
</comment>
<comment type="miscellaneous">
    <text evidence="4">Present with 1590 molecules/cell in log phase SD medium.</text>
</comment>
<accession>P36121</accession>
<accession>D6VX90</accession>
<evidence type="ECO:0000256" key="1">
    <source>
        <dbReference type="SAM" id="MobiDB-lite"/>
    </source>
</evidence>
<evidence type="ECO:0000269" key="2">
    <source>
    </source>
</evidence>
<evidence type="ECO:0000269" key="3">
    <source>
    </source>
</evidence>
<evidence type="ECO:0000269" key="4">
    <source>
    </source>
</evidence>
<evidence type="ECO:0000269" key="5">
    <source>
    </source>
</evidence>
<evidence type="ECO:0007744" key="6">
    <source>
    </source>
</evidence>
<evidence type="ECO:0007744" key="7">
    <source>
    </source>
</evidence>
<evidence type="ECO:0007829" key="8">
    <source>
        <dbReference type="PDB" id="6TUT"/>
    </source>
</evidence>
<evidence type="ECO:0007829" key="9">
    <source>
        <dbReference type="PDB" id="7Z31"/>
    </source>
</evidence>
<evidence type="ECO:0007829" key="10">
    <source>
        <dbReference type="PDB" id="8BWS"/>
    </source>
</evidence>
<name>RPC5_YEAST</name>
<feature type="chain" id="PRO_0000203203" description="DNA-directed RNA polymerase III subunit RPC5">
    <location>
        <begin position="1"/>
        <end position="282"/>
    </location>
</feature>
<feature type="region of interest" description="Disordered" evidence="1">
    <location>
        <begin position="1"/>
        <end position="70"/>
    </location>
</feature>
<feature type="compositionally biased region" description="Acidic residues" evidence="1">
    <location>
        <begin position="10"/>
        <end position="35"/>
    </location>
</feature>
<feature type="compositionally biased region" description="Acidic residues" evidence="1">
    <location>
        <begin position="60"/>
        <end position="70"/>
    </location>
</feature>
<feature type="modified residue" description="Phosphothreonine" evidence="6 7">
    <location>
        <position position="61"/>
    </location>
</feature>
<feature type="strand" evidence="8">
    <location>
        <begin position="70"/>
        <end position="74"/>
    </location>
</feature>
<feature type="strand" evidence="9">
    <location>
        <begin position="75"/>
        <end position="78"/>
    </location>
</feature>
<feature type="strand" evidence="9">
    <location>
        <begin position="86"/>
        <end position="93"/>
    </location>
</feature>
<feature type="strand" evidence="9">
    <location>
        <begin position="95"/>
        <end position="101"/>
    </location>
</feature>
<feature type="strand" evidence="9">
    <location>
        <begin position="108"/>
        <end position="112"/>
    </location>
</feature>
<feature type="turn" evidence="9">
    <location>
        <begin position="114"/>
        <end position="116"/>
    </location>
</feature>
<feature type="strand" evidence="9">
    <location>
        <begin position="118"/>
        <end position="124"/>
    </location>
</feature>
<feature type="strand" evidence="9">
    <location>
        <begin position="127"/>
        <end position="130"/>
    </location>
</feature>
<feature type="helix" evidence="9">
    <location>
        <begin position="133"/>
        <end position="139"/>
    </location>
</feature>
<feature type="strand" evidence="10">
    <location>
        <begin position="140"/>
        <end position="142"/>
    </location>
</feature>
<feature type="strand" evidence="9">
    <location>
        <begin position="144"/>
        <end position="153"/>
    </location>
</feature>
<feature type="strand" evidence="9">
    <location>
        <begin position="158"/>
        <end position="166"/>
    </location>
</feature>
<feature type="strand" evidence="9">
    <location>
        <begin position="168"/>
        <end position="172"/>
    </location>
</feature>
<feature type="strand" evidence="9">
    <location>
        <begin position="175"/>
        <end position="182"/>
    </location>
</feature>
<feature type="helix" evidence="9">
    <location>
        <begin position="184"/>
        <end position="194"/>
    </location>
</feature>
<feature type="helix" evidence="9">
    <location>
        <begin position="229"/>
        <end position="237"/>
    </location>
</feature>
<feature type="strand" evidence="10">
    <location>
        <begin position="243"/>
        <end position="245"/>
    </location>
</feature>
<feature type="strand" evidence="9">
    <location>
        <begin position="246"/>
        <end position="248"/>
    </location>
</feature>
<feature type="helix" evidence="9">
    <location>
        <begin position="253"/>
        <end position="264"/>
    </location>
</feature>
<feature type="helix" evidence="9">
    <location>
        <begin position="274"/>
        <end position="278"/>
    </location>
</feature>